<evidence type="ECO:0000250" key="1"/>
<evidence type="ECO:0000255" key="2">
    <source>
        <dbReference type="PROSITE-ProRule" id="PRU00175"/>
    </source>
</evidence>
<name>ASR1_EREGS</name>
<proteinExistence type="inferred from homology"/>
<sequence>MLKHISSHIAMGCPQDECSICWESMPSGVGRLMPCGHEYHLACIRKWFHLHSGNRSCPVCRTEASVLVDTDHEVKIDLSVGQLLDFYGLLDEIGSQLLAITLQDHSTQDDEVNEEGLAEQRAQLTLVQCGICGEMNGDIDTCCNRCHHMYHHSCLGQLLVEVNAEREQGWSHCIFCYEQLVPLYISGARRVLSLQDRGVHRGRVRNNRSILTELIYERSGVLVHGIEDQHASQHDINDIEHSWHLLEQNRQRKQLEYQDKCKIQAHVRRILDHYYHCAKVTKAQYTFINKKVSQTLYALSRGVYPAVDLDYDGIAKTLILDEMEKLSS</sequence>
<feature type="chain" id="PRO_0000055759" description="Alcohol-sensitive RING finger protein 1">
    <location>
        <begin position="1"/>
        <end position="328"/>
    </location>
</feature>
<feature type="zinc finger region" description="RING-type 1; atypical" evidence="2">
    <location>
        <begin position="18"/>
        <end position="61"/>
    </location>
</feature>
<feature type="zinc finger region" description="RING-type 2; atypical" evidence="2">
    <location>
        <begin position="129"/>
        <end position="177"/>
    </location>
</feature>
<accession>Q75DC2</accession>
<comment type="function">
    <text evidence="1">Required for tolerance to alcohol.</text>
</comment>
<comment type="subcellular location">
    <subcellularLocation>
        <location evidence="1">Cytoplasm</location>
    </subcellularLocation>
    <subcellularLocation>
        <location evidence="1">Nucleus</location>
    </subcellularLocation>
    <text evidence="1">Predominantly cytoplasmic. Accumulates in the nucleus specifically upon alcohol stress.</text>
</comment>
<reference key="1">
    <citation type="journal article" date="2004" name="Science">
        <title>The Ashbya gossypii genome as a tool for mapping the ancient Saccharomyces cerevisiae genome.</title>
        <authorList>
            <person name="Dietrich F.S."/>
            <person name="Voegeli S."/>
            <person name="Brachat S."/>
            <person name="Lerch A."/>
            <person name="Gates K."/>
            <person name="Steiner S."/>
            <person name="Mohr C."/>
            <person name="Poehlmann R."/>
            <person name="Luedi P."/>
            <person name="Choi S."/>
            <person name="Wing R.A."/>
            <person name="Flavier A."/>
            <person name="Gaffney T.D."/>
            <person name="Philippsen P."/>
        </authorList>
    </citation>
    <scope>NUCLEOTIDE SEQUENCE [LARGE SCALE GENOMIC DNA]</scope>
    <source>
        <strain>ATCC 10895 / CBS 109.51 / FGSC 9923 / NRRL Y-1056</strain>
    </source>
</reference>
<reference key="2">
    <citation type="journal article" date="2013" name="G3 (Bethesda)">
        <title>Genomes of Ashbya fungi isolated from insects reveal four mating-type loci, numerous translocations, lack of transposons, and distinct gene duplications.</title>
        <authorList>
            <person name="Dietrich F.S."/>
            <person name="Voegeli S."/>
            <person name="Kuo S."/>
            <person name="Philippsen P."/>
        </authorList>
    </citation>
    <scope>GENOME REANNOTATION</scope>
    <source>
        <strain>ATCC 10895 / CBS 109.51 / FGSC 9923 / NRRL Y-1056</strain>
    </source>
</reference>
<organism>
    <name type="scientific">Eremothecium gossypii (strain ATCC 10895 / CBS 109.51 / FGSC 9923 / NRRL Y-1056)</name>
    <name type="common">Yeast</name>
    <name type="synonym">Ashbya gossypii</name>
    <dbReference type="NCBI Taxonomy" id="284811"/>
    <lineage>
        <taxon>Eukaryota</taxon>
        <taxon>Fungi</taxon>
        <taxon>Dikarya</taxon>
        <taxon>Ascomycota</taxon>
        <taxon>Saccharomycotina</taxon>
        <taxon>Saccharomycetes</taxon>
        <taxon>Saccharomycetales</taxon>
        <taxon>Saccharomycetaceae</taxon>
        <taxon>Eremothecium</taxon>
    </lineage>
</organism>
<keyword id="KW-0963">Cytoplasm</keyword>
<keyword id="KW-0479">Metal-binding</keyword>
<keyword id="KW-0539">Nucleus</keyword>
<keyword id="KW-1185">Reference proteome</keyword>
<keyword id="KW-0677">Repeat</keyword>
<keyword id="KW-0862">Zinc</keyword>
<keyword id="KW-0863">Zinc-finger</keyword>
<protein>
    <recommendedName>
        <fullName>Alcohol-sensitive RING finger protein 1</fullName>
    </recommendedName>
</protein>
<dbReference type="EMBL" id="AE016815">
    <property type="protein sequence ID" value="AAS50875.1"/>
    <property type="molecule type" value="Genomic_DNA"/>
</dbReference>
<dbReference type="RefSeq" id="NP_983051.1">
    <property type="nucleotide sequence ID" value="NM_208404.1"/>
</dbReference>
<dbReference type="FunCoup" id="Q75DC2">
    <property type="interactions" value="138"/>
</dbReference>
<dbReference type="STRING" id="284811.Q75DC2"/>
<dbReference type="EnsemblFungi" id="AAS50875">
    <property type="protein sequence ID" value="AAS50875"/>
    <property type="gene ID" value="AGOS_ABR104W"/>
</dbReference>
<dbReference type="GeneID" id="4619155"/>
<dbReference type="KEGG" id="ago:AGOS_ABR104W"/>
<dbReference type="eggNOG" id="KOG0800">
    <property type="taxonomic scope" value="Eukaryota"/>
</dbReference>
<dbReference type="HOGENOM" id="CLU_071677_0_0_1"/>
<dbReference type="InParanoid" id="Q75DC2"/>
<dbReference type="OMA" id="QEINICC"/>
<dbReference type="OrthoDB" id="8062037at2759"/>
<dbReference type="Proteomes" id="UP000000591">
    <property type="component" value="Chromosome II"/>
</dbReference>
<dbReference type="GO" id="GO:0005737">
    <property type="term" value="C:cytoplasm"/>
    <property type="evidence" value="ECO:0000318"/>
    <property type="project" value="GO_Central"/>
</dbReference>
<dbReference type="GO" id="GO:0005634">
    <property type="term" value="C:nucleus"/>
    <property type="evidence" value="ECO:0007669"/>
    <property type="project" value="UniProtKB-SubCell"/>
</dbReference>
<dbReference type="GO" id="GO:0061630">
    <property type="term" value="F:ubiquitin protein ligase activity"/>
    <property type="evidence" value="ECO:0000318"/>
    <property type="project" value="GO_Central"/>
</dbReference>
<dbReference type="GO" id="GO:0008270">
    <property type="term" value="F:zinc ion binding"/>
    <property type="evidence" value="ECO:0007669"/>
    <property type="project" value="UniProtKB-KW"/>
</dbReference>
<dbReference type="GO" id="GO:0006511">
    <property type="term" value="P:ubiquitin-dependent protein catabolic process"/>
    <property type="evidence" value="ECO:0000318"/>
    <property type="project" value="GO_Central"/>
</dbReference>
<dbReference type="CDD" id="cd23120">
    <property type="entry name" value="RING-H2_ASR1"/>
    <property type="match status" value="1"/>
</dbReference>
<dbReference type="Gene3D" id="3.30.40.10">
    <property type="entry name" value="Zinc/RING finger domain, C3HC4 (zinc finger)"/>
    <property type="match status" value="1"/>
</dbReference>
<dbReference type="InterPro" id="IPR052788">
    <property type="entry name" value="RING-type_E3_ligase_ATL"/>
</dbReference>
<dbReference type="InterPro" id="IPR011011">
    <property type="entry name" value="Znf_FYVE_PHD"/>
</dbReference>
<dbReference type="InterPro" id="IPR001841">
    <property type="entry name" value="Znf_RING"/>
</dbReference>
<dbReference type="InterPro" id="IPR013083">
    <property type="entry name" value="Znf_RING/FYVE/PHD"/>
</dbReference>
<dbReference type="PANTHER" id="PTHR45798:SF97">
    <property type="entry name" value="ALCOHOL-SENSITIVE RING FINGER PROTEIN 1"/>
    <property type="match status" value="1"/>
</dbReference>
<dbReference type="PANTHER" id="PTHR45798">
    <property type="entry name" value="RING-H2 FINGER PROTEIN ATL61-RELATED-RELATED"/>
    <property type="match status" value="1"/>
</dbReference>
<dbReference type="Pfam" id="PF13639">
    <property type="entry name" value="zf-RING_2"/>
    <property type="match status" value="1"/>
</dbReference>
<dbReference type="SMART" id="SM00184">
    <property type="entry name" value="RING"/>
    <property type="match status" value="2"/>
</dbReference>
<dbReference type="SUPFAM" id="SSF57903">
    <property type="entry name" value="FYVE/PHD zinc finger"/>
    <property type="match status" value="1"/>
</dbReference>
<dbReference type="SUPFAM" id="SSF57850">
    <property type="entry name" value="RING/U-box"/>
    <property type="match status" value="1"/>
</dbReference>
<dbReference type="PROSITE" id="PS50089">
    <property type="entry name" value="ZF_RING_2"/>
    <property type="match status" value="1"/>
</dbReference>
<gene>
    <name type="primary">ASR1</name>
    <name type="ordered locus">ABR104W</name>
</gene>